<dbReference type="EC" id="2.1.1.214"/>
<dbReference type="EMBL" id="CU329671">
    <property type="protein sequence ID" value="CAB38506.2"/>
    <property type="molecule type" value="Genomic_DNA"/>
</dbReference>
<dbReference type="PIR" id="T39566">
    <property type="entry name" value="T39566"/>
</dbReference>
<dbReference type="RefSeq" id="NP_596497.2">
    <property type="nucleotide sequence ID" value="NM_001022418.2"/>
</dbReference>
<dbReference type="FunCoup" id="O94636">
    <property type="interactions" value="796"/>
</dbReference>
<dbReference type="STRING" id="284812.O94636"/>
<dbReference type="iPTMnet" id="O94636"/>
<dbReference type="PaxDb" id="4896-SPBC16D10.02.1"/>
<dbReference type="EnsemblFungi" id="SPBC16D10.02.1">
    <property type="protein sequence ID" value="SPBC16D10.02.1:pep"/>
    <property type="gene ID" value="SPBC16D10.02"/>
</dbReference>
<dbReference type="GeneID" id="2540011"/>
<dbReference type="KEGG" id="spo:2540011"/>
<dbReference type="PomBase" id="SPBC16D10.02">
    <property type="gene designation" value="trm11"/>
</dbReference>
<dbReference type="VEuPathDB" id="FungiDB:SPBC16D10.02"/>
<dbReference type="eggNOG" id="KOG2671">
    <property type="taxonomic scope" value="Eukaryota"/>
</dbReference>
<dbReference type="HOGENOM" id="CLU_029646_3_0_1"/>
<dbReference type="InParanoid" id="O94636"/>
<dbReference type="OMA" id="AFNKWSR"/>
<dbReference type="PhylomeDB" id="O94636"/>
<dbReference type="PRO" id="PR:O94636"/>
<dbReference type="Proteomes" id="UP000002485">
    <property type="component" value="Chromosome II"/>
</dbReference>
<dbReference type="GO" id="GO:0005737">
    <property type="term" value="C:cytoplasm"/>
    <property type="evidence" value="ECO:0000318"/>
    <property type="project" value="GO_Central"/>
</dbReference>
<dbReference type="GO" id="GO:0005829">
    <property type="term" value="C:cytosol"/>
    <property type="evidence" value="ECO:0007005"/>
    <property type="project" value="PomBase"/>
</dbReference>
<dbReference type="GO" id="GO:0005634">
    <property type="term" value="C:nucleus"/>
    <property type="evidence" value="ECO:0007005"/>
    <property type="project" value="PomBase"/>
</dbReference>
<dbReference type="GO" id="GO:0043528">
    <property type="term" value="C:tRNA (m2G10) methyltransferase complex"/>
    <property type="evidence" value="ECO:0000305"/>
    <property type="project" value="PomBase"/>
</dbReference>
<dbReference type="GO" id="GO:0008168">
    <property type="term" value="F:methyltransferase activity"/>
    <property type="evidence" value="ECO:0000318"/>
    <property type="project" value="GO_Central"/>
</dbReference>
<dbReference type="GO" id="GO:0160102">
    <property type="term" value="F:tRNA (guanine(10)-N2)-methyltransferase activity"/>
    <property type="evidence" value="ECO:0000266"/>
    <property type="project" value="PomBase"/>
</dbReference>
<dbReference type="GO" id="GO:0000049">
    <property type="term" value="F:tRNA binding"/>
    <property type="evidence" value="ECO:0007669"/>
    <property type="project" value="UniProtKB-KW"/>
</dbReference>
<dbReference type="GO" id="GO:0002940">
    <property type="term" value="P:tRNA N2-guanine methylation"/>
    <property type="evidence" value="ECO:0000305"/>
    <property type="project" value="PomBase"/>
</dbReference>
<dbReference type="Gene3D" id="3.40.50.150">
    <property type="entry name" value="Vaccinia Virus protein VP39"/>
    <property type="match status" value="1"/>
</dbReference>
<dbReference type="InterPro" id="IPR002052">
    <property type="entry name" value="DNA_methylase_N6_adenine_CS"/>
</dbReference>
<dbReference type="InterPro" id="IPR000241">
    <property type="entry name" value="RlmKL-like_Mtase"/>
</dbReference>
<dbReference type="InterPro" id="IPR029063">
    <property type="entry name" value="SAM-dependent_MTases_sf"/>
</dbReference>
<dbReference type="InterPro" id="IPR016691">
    <property type="entry name" value="tRNA_mtfrase_TRM11"/>
</dbReference>
<dbReference type="PANTHER" id="PTHR13370">
    <property type="entry name" value="RNA METHYLASE-RELATED"/>
    <property type="match status" value="1"/>
</dbReference>
<dbReference type="PANTHER" id="PTHR13370:SF3">
    <property type="entry name" value="TRNA (GUANINE(10)-N2)-METHYLTRANSFERASE HOMOLOG"/>
    <property type="match status" value="1"/>
</dbReference>
<dbReference type="Pfam" id="PF01170">
    <property type="entry name" value="UPF0020"/>
    <property type="match status" value="1"/>
</dbReference>
<dbReference type="PIRSF" id="PIRSF017259">
    <property type="entry name" value="tRNA_mtfrase_TRM11"/>
    <property type="match status" value="1"/>
</dbReference>
<dbReference type="SUPFAM" id="SSF53335">
    <property type="entry name" value="S-adenosyl-L-methionine-dependent methyltransferases"/>
    <property type="match status" value="1"/>
</dbReference>
<dbReference type="PROSITE" id="PS00092">
    <property type="entry name" value="N6_MTASE"/>
    <property type="match status" value="1"/>
</dbReference>
<dbReference type="PROSITE" id="PS51627">
    <property type="entry name" value="SAM_MT_TRM11"/>
    <property type="match status" value="1"/>
</dbReference>
<organism>
    <name type="scientific">Schizosaccharomyces pombe (strain 972 / ATCC 24843)</name>
    <name type="common">Fission yeast</name>
    <dbReference type="NCBI Taxonomy" id="284812"/>
    <lineage>
        <taxon>Eukaryota</taxon>
        <taxon>Fungi</taxon>
        <taxon>Dikarya</taxon>
        <taxon>Ascomycota</taxon>
        <taxon>Taphrinomycotina</taxon>
        <taxon>Schizosaccharomycetes</taxon>
        <taxon>Schizosaccharomycetales</taxon>
        <taxon>Schizosaccharomycetaceae</taxon>
        <taxon>Schizosaccharomyces</taxon>
    </lineage>
</organism>
<accession>O94636</accession>
<name>TRM11_SCHPO</name>
<protein>
    <recommendedName>
        <fullName>tRNA (guanine(10)-N(2))-methyltransferase</fullName>
        <ecNumber>2.1.1.214</ecNumber>
    </recommendedName>
    <alternativeName>
        <fullName>tRNA guanosine-2'-O-methyltransferase TRM11</fullName>
        <shortName>tRNA methylase 11</shortName>
    </alternativeName>
</protein>
<comment type="function">
    <text evidence="1">Catalytic subunit of an S-adenosyl-L-methionine-dependent tRNA methyltransferase complex that mediates the methylation of the guanosine nucleotide at position 10 (m2G10) in tRNAs.</text>
</comment>
<comment type="catalytic activity">
    <reaction>
        <text>guanosine(10) in tRNA + S-adenosyl-L-methionine = N(2)-methylguanosine(10) in tRNA + S-adenosyl-L-homocysteine + H(+)</text>
        <dbReference type="Rhea" id="RHEA:43128"/>
        <dbReference type="Rhea" id="RHEA-COMP:10355"/>
        <dbReference type="Rhea" id="RHEA-COMP:10357"/>
        <dbReference type="ChEBI" id="CHEBI:15378"/>
        <dbReference type="ChEBI" id="CHEBI:57856"/>
        <dbReference type="ChEBI" id="CHEBI:59789"/>
        <dbReference type="ChEBI" id="CHEBI:74269"/>
        <dbReference type="ChEBI" id="CHEBI:74481"/>
        <dbReference type="EC" id="2.1.1.214"/>
    </reaction>
</comment>
<comment type="subunit">
    <text evidence="1">Interacts with trm112.</text>
</comment>
<comment type="subcellular location">
    <subcellularLocation>
        <location evidence="3">Cytoplasm</location>
    </subcellularLocation>
    <subcellularLocation>
        <location evidence="3">Nucleus</location>
    </subcellularLocation>
</comment>
<comment type="similarity">
    <text evidence="2">Belongs to the class I-like SAM-binding methyltransferase superfamily. TRM11 methyltransferase family.</text>
</comment>
<proteinExistence type="inferred from homology"/>
<keyword id="KW-0963">Cytoplasm</keyword>
<keyword id="KW-0489">Methyltransferase</keyword>
<keyword id="KW-0539">Nucleus</keyword>
<keyword id="KW-1185">Reference proteome</keyword>
<keyword id="KW-0694">RNA-binding</keyword>
<keyword id="KW-0949">S-adenosyl-L-methionine</keyword>
<keyword id="KW-0808">Transferase</keyword>
<keyword id="KW-0819">tRNA processing</keyword>
<keyword id="KW-0820">tRNA-binding</keyword>
<gene>
    <name type="primary">trm11</name>
    <name type="ORF">SPBC16D10.02</name>
</gene>
<sequence>MSVYLLHLASTHAHFHLPELETLAKIENVEFWLIPKSEYLNVAFKSDKSRNQALFSHAIKEFQDSISPNDATTQNPFMLAVVNSNEDARRWIRRSIFCKGIYEIYCIGDSFTRLHEKMKELNPAPWDSFKHNSSYKFTFETFGTRRTMKEQLSIISDFEYMQLQGPVSMHNPQHVFTVLENRRNNVEGPKVYFGHWCGSGSRDAIDTFDLKQRSYIGITSFDAELSLVTAQMAMAAPGKLIYDPFVGTGSFLYTCSFFGAHTLGSDIDGRQMRGKNGRSIKSNFRQYKLSPFFLDTFTGDVTNCPLRKNLLLDAIVCDPPYGVRAGAKKIAKCSQRPPKESSSTGNHYPKLEQYQISDMVYDIICFASDRLVDGGRLVLWLPTITEEYGIDDIPSHPYLSLIYNSIQPFTHWSRRLLTFQRLPRAHDSKSLNLLPKINNKTPSHHNFREKYFSSAGRASASTKFSPVLE</sequence>
<evidence type="ECO:0000250" key="1"/>
<evidence type="ECO:0000255" key="2">
    <source>
        <dbReference type="PROSITE-ProRule" id="PRU00959"/>
    </source>
</evidence>
<evidence type="ECO:0000269" key="3">
    <source>
    </source>
</evidence>
<feature type="chain" id="PRO_0000316241" description="tRNA (guanine(10)-N(2))-methyltransferase">
    <location>
        <begin position="1"/>
        <end position="469"/>
    </location>
</feature>
<reference key="1">
    <citation type="journal article" date="2002" name="Nature">
        <title>The genome sequence of Schizosaccharomyces pombe.</title>
        <authorList>
            <person name="Wood V."/>
            <person name="Gwilliam R."/>
            <person name="Rajandream M.A."/>
            <person name="Lyne M.H."/>
            <person name="Lyne R."/>
            <person name="Stewart A."/>
            <person name="Sgouros J.G."/>
            <person name="Peat N."/>
            <person name="Hayles J."/>
            <person name="Baker S.G."/>
            <person name="Basham D."/>
            <person name="Bowman S."/>
            <person name="Brooks K."/>
            <person name="Brown D."/>
            <person name="Brown S."/>
            <person name="Chillingworth T."/>
            <person name="Churcher C.M."/>
            <person name="Collins M."/>
            <person name="Connor R."/>
            <person name="Cronin A."/>
            <person name="Davis P."/>
            <person name="Feltwell T."/>
            <person name="Fraser A."/>
            <person name="Gentles S."/>
            <person name="Goble A."/>
            <person name="Hamlin N."/>
            <person name="Harris D.E."/>
            <person name="Hidalgo J."/>
            <person name="Hodgson G."/>
            <person name="Holroyd S."/>
            <person name="Hornsby T."/>
            <person name="Howarth S."/>
            <person name="Huckle E.J."/>
            <person name="Hunt S."/>
            <person name="Jagels K."/>
            <person name="James K.D."/>
            <person name="Jones L."/>
            <person name="Jones M."/>
            <person name="Leather S."/>
            <person name="McDonald S."/>
            <person name="McLean J."/>
            <person name="Mooney P."/>
            <person name="Moule S."/>
            <person name="Mungall K.L."/>
            <person name="Murphy L.D."/>
            <person name="Niblett D."/>
            <person name="Odell C."/>
            <person name="Oliver K."/>
            <person name="O'Neil S."/>
            <person name="Pearson D."/>
            <person name="Quail M.A."/>
            <person name="Rabbinowitsch E."/>
            <person name="Rutherford K.M."/>
            <person name="Rutter S."/>
            <person name="Saunders D."/>
            <person name="Seeger K."/>
            <person name="Sharp S."/>
            <person name="Skelton J."/>
            <person name="Simmonds M.N."/>
            <person name="Squares R."/>
            <person name="Squares S."/>
            <person name="Stevens K."/>
            <person name="Taylor K."/>
            <person name="Taylor R.G."/>
            <person name="Tivey A."/>
            <person name="Walsh S.V."/>
            <person name="Warren T."/>
            <person name="Whitehead S."/>
            <person name="Woodward J.R."/>
            <person name="Volckaert G."/>
            <person name="Aert R."/>
            <person name="Robben J."/>
            <person name="Grymonprez B."/>
            <person name="Weltjens I."/>
            <person name="Vanstreels E."/>
            <person name="Rieger M."/>
            <person name="Schaefer M."/>
            <person name="Mueller-Auer S."/>
            <person name="Gabel C."/>
            <person name="Fuchs M."/>
            <person name="Duesterhoeft A."/>
            <person name="Fritzc C."/>
            <person name="Holzer E."/>
            <person name="Moestl D."/>
            <person name="Hilbert H."/>
            <person name="Borzym K."/>
            <person name="Langer I."/>
            <person name="Beck A."/>
            <person name="Lehrach H."/>
            <person name="Reinhardt R."/>
            <person name="Pohl T.M."/>
            <person name="Eger P."/>
            <person name="Zimmermann W."/>
            <person name="Wedler H."/>
            <person name="Wambutt R."/>
            <person name="Purnelle B."/>
            <person name="Goffeau A."/>
            <person name="Cadieu E."/>
            <person name="Dreano S."/>
            <person name="Gloux S."/>
            <person name="Lelaure V."/>
            <person name="Mottier S."/>
            <person name="Galibert F."/>
            <person name="Aves S.J."/>
            <person name="Xiang Z."/>
            <person name="Hunt C."/>
            <person name="Moore K."/>
            <person name="Hurst S.M."/>
            <person name="Lucas M."/>
            <person name="Rochet M."/>
            <person name="Gaillardin C."/>
            <person name="Tallada V.A."/>
            <person name="Garzon A."/>
            <person name="Thode G."/>
            <person name="Daga R.R."/>
            <person name="Cruzado L."/>
            <person name="Jimenez J."/>
            <person name="Sanchez M."/>
            <person name="del Rey F."/>
            <person name="Benito J."/>
            <person name="Dominguez A."/>
            <person name="Revuelta J.L."/>
            <person name="Moreno S."/>
            <person name="Armstrong J."/>
            <person name="Forsburg S.L."/>
            <person name="Cerutti L."/>
            <person name="Lowe T."/>
            <person name="McCombie W.R."/>
            <person name="Paulsen I."/>
            <person name="Potashkin J."/>
            <person name="Shpakovski G.V."/>
            <person name="Ussery D."/>
            <person name="Barrell B.G."/>
            <person name="Nurse P."/>
        </authorList>
    </citation>
    <scope>NUCLEOTIDE SEQUENCE [LARGE SCALE GENOMIC DNA]</scope>
    <source>
        <strain>972 / ATCC 24843</strain>
    </source>
</reference>
<reference key="2">
    <citation type="journal article" date="2006" name="Nat. Biotechnol.">
        <title>ORFeome cloning and global analysis of protein localization in the fission yeast Schizosaccharomyces pombe.</title>
        <authorList>
            <person name="Matsuyama A."/>
            <person name="Arai R."/>
            <person name="Yashiroda Y."/>
            <person name="Shirai A."/>
            <person name="Kamata A."/>
            <person name="Sekido S."/>
            <person name="Kobayashi Y."/>
            <person name="Hashimoto A."/>
            <person name="Hamamoto M."/>
            <person name="Hiraoka Y."/>
            <person name="Horinouchi S."/>
            <person name="Yoshida M."/>
        </authorList>
    </citation>
    <scope>SUBCELLULAR LOCATION [LARGE SCALE ANALYSIS]</scope>
</reference>